<reference key="1">
    <citation type="journal article" date="2008" name="BMC Genomics">
        <title>Complete genome of Phenylobacterium zucineum - a novel facultative intracellular bacterium isolated from human erythroleukemia cell line K562.</title>
        <authorList>
            <person name="Luo Y."/>
            <person name="Xu X."/>
            <person name="Ding Z."/>
            <person name="Liu Z."/>
            <person name="Zhang B."/>
            <person name="Yan Z."/>
            <person name="Sun J."/>
            <person name="Hu S."/>
            <person name="Hu X."/>
        </authorList>
    </citation>
    <scope>NUCLEOTIDE SEQUENCE [LARGE SCALE GENOMIC DNA]</scope>
    <source>
        <strain>HLK1</strain>
    </source>
</reference>
<organism>
    <name type="scientific">Phenylobacterium zucineum (strain HLK1)</name>
    <dbReference type="NCBI Taxonomy" id="450851"/>
    <lineage>
        <taxon>Bacteria</taxon>
        <taxon>Pseudomonadati</taxon>
        <taxon>Pseudomonadota</taxon>
        <taxon>Alphaproteobacteria</taxon>
        <taxon>Caulobacterales</taxon>
        <taxon>Caulobacteraceae</taxon>
        <taxon>Phenylobacterium</taxon>
    </lineage>
</organism>
<gene>
    <name evidence="1" type="primary">lpxK</name>
    <name type="ordered locus">PHZ_c0511</name>
</gene>
<sequence>MKLATPRWWYERDRRSMPMTRALLTPLSWAWAGVTARRIARARPLDAGAPVICVGNLTMGGAGKTPVVREIARRLGGHVLSRGYGGSLAGPVRVDPAVHASGEVGDEPLMLARDLPVWVSRDRLAGARAAAAAGARVVVMDDGHQNPSVKKALSLVVVDGETRNGEWPFGDGRVFPAGPMREPLAAGLARADAAVILLPADLAAPDPELVRVLSKVPVLIARLEPEGPPPVGPQVAFAGIGKPWKFERALKAAGCELVEFAPFPDHYAYDAAALALLADRAAQDGAGLLTTEKDWIRLPPAWRERVRPWPVRAVFQDEAALDAVVGGL</sequence>
<comment type="function">
    <text evidence="1">Transfers the gamma-phosphate of ATP to the 4'-position of a tetraacyldisaccharide 1-phosphate intermediate (termed DS-1-P) to form tetraacyldisaccharide 1,4'-bis-phosphate (lipid IVA).</text>
</comment>
<comment type="catalytic activity">
    <reaction evidence="1">
        <text>a lipid A disaccharide + ATP = a lipid IVA + ADP + H(+)</text>
        <dbReference type="Rhea" id="RHEA:67840"/>
        <dbReference type="ChEBI" id="CHEBI:15378"/>
        <dbReference type="ChEBI" id="CHEBI:30616"/>
        <dbReference type="ChEBI" id="CHEBI:176343"/>
        <dbReference type="ChEBI" id="CHEBI:176425"/>
        <dbReference type="ChEBI" id="CHEBI:456216"/>
        <dbReference type="EC" id="2.7.1.130"/>
    </reaction>
</comment>
<comment type="pathway">
    <text evidence="1">Glycolipid biosynthesis; lipid IV(A) biosynthesis; lipid IV(A) from (3R)-3-hydroxytetradecanoyl-[acyl-carrier-protein] and UDP-N-acetyl-alpha-D-glucosamine: step 6/6.</text>
</comment>
<comment type="similarity">
    <text evidence="1">Belongs to the LpxK family.</text>
</comment>
<evidence type="ECO:0000255" key="1">
    <source>
        <dbReference type="HAMAP-Rule" id="MF_00409"/>
    </source>
</evidence>
<keyword id="KW-0067">ATP-binding</keyword>
<keyword id="KW-0418">Kinase</keyword>
<keyword id="KW-0441">Lipid A biosynthesis</keyword>
<keyword id="KW-0444">Lipid biosynthesis</keyword>
<keyword id="KW-0443">Lipid metabolism</keyword>
<keyword id="KW-0547">Nucleotide-binding</keyword>
<keyword id="KW-1185">Reference proteome</keyword>
<keyword id="KW-0808">Transferase</keyword>
<proteinExistence type="inferred from homology"/>
<feature type="chain" id="PRO_1000123726" description="Tetraacyldisaccharide 4'-kinase">
    <location>
        <begin position="1"/>
        <end position="328"/>
    </location>
</feature>
<feature type="binding site" evidence="1">
    <location>
        <begin position="58"/>
        <end position="65"/>
    </location>
    <ligand>
        <name>ATP</name>
        <dbReference type="ChEBI" id="CHEBI:30616"/>
    </ligand>
</feature>
<accession>B4REI3</accession>
<dbReference type="EC" id="2.7.1.130" evidence="1"/>
<dbReference type="EMBL" id="CP000747">
    <property type="protein sequence ID" value="ACG76925.1"/>
    <property type="molecule type" value="Genomic_DNA"/>
</dbReference>
<dbReference type="RefSeq" id="WP_012521073.1">
    <property type="nucleotide sequence ID" value="NC_011144.1"/>
</dbReference>
<dbReference type="SMR" id="B4REI3"/>
<dbReference type="STRING" id="450851.PHZ_c0511"/>
<dbReference type="KEGG" id="pzu:PHZ_c0511"/>
<dbReference type="eggNOG" id="COG1663">
    <property type="taxonomic scope" value="Bacteria"/>
</dbReference>
<dbReference type="HOGENOM" id="CLU_038816_0_0_5"/>
<dbReference type="OrthoDB" id="9766423at2"/>
<dbReference type="UniPathway" id="UPA00359">
    <property type="reaction ID" value="UER00482"/>
</dbReference>
<dbReference type="Proteomes" id="UP000001868">
    <property type="component" value="Chromosome"/>
</dbReference>
<dbReference type="GO" id="GO:0005886">
    <property type="term" value="C:plasma membrane"/>
    <property type="evidence" value="ECO:0007669"/>
    <property type="project" value="TreeGrafter"/>
</dbReference>
<dbReference type="GO" id="GO:0005524">
    <property type="term" value="F:ATP binding"/>
    <property type="evidence" value="ECO:0007669"/>
    <property type="project" value="UniProtKB-UniRule"/>
</dbReference>
<dbReference type="GO" id="GO:0009029">
    <property type="term" value="F:tetraacyldisaccharide 4'-kinase activity"/>
    <property type="evidence" value="ECO:0007669"/>
    <property type="project" value="UniProtKB-UniRule"/>
</dbReference>
<dbReference type="GO" id="GO:0009245">
    <property type="term" value="P:lipid A biosynthetic process"/>
    <property type="evidence" value="ECO:0007669"/>
    <property type="project" value="UniProtKB-UniRule"/>
</dbReference>
<dbReference type="GO" id="GO:0009244">
    <property type="term" value="P:lipopolysaccharide core region biosynthetic process"/>
    <property type="evidence" value="ECO:0007669"/>
    <property type="project" value="TreeGrafter"/>
</dbReference>
<dbReference type="HAMAP" id="MF_00409">
    <property type="entry name" value="LpxK"/>
    <property type="match status" value="1"/>
</dbReference>
<dbReference type="InterPro" id="IPR003758">
    <property type="entry name" value="LpxK"/>
</dbReference>
<dbReference type="InterPro" id="IPR027417">
    <property type="entry name" value="P-loop_NTPase"/>
</dbReference>
<dbReference type="NCBIfam" id="TIGR00682">
    <property type="entry name" value="lpxK"/>
    <property type="match status" value="1"/>
</dbReference>
<dbReference type="PANTHER" id="PTHR42724">
    <property type="entry name" value="TETRAACYLDISACCHARIDE 4'-KINASE"/>
    <property type="match status" value="1"/>
</dbReference>
<dbReference type="PANTHER" id="PTHR42724:SF1">
    <property type="entry name" value="TETRAACYLDISACCHARIDE 4'-KINASE, MITOCHONDRIAL-RELATED"/>
    <property type="match status" value="1"/>
</dbReference>
<dbReference type="Pfam" id="PF02606">
    <property type="entry name" value="LpxK"/>
    <property type="match status" value="1"/>
</dbReference>
<dbReference type="SUPFAM" id="SSF52540">
    <property type="entry name" value="P-loop containing nucleoside triphosphate hydrolases"/>
    <property type="match status" value="1"/>
</dbReference>
<name>LPXK_PHEZH</name>
<protein>
    <recommendedName>
        <fullName evidence="1">Tetraacyldisaccharide 4'-kinase</fullName>
        <ecNumber evidence="1">2.7.1.130</ecNumber>
    </recommendedName>
    <alternativeName>
        <fullName evidence="1">Lipid A 4'-kinase</fullName>
    </alternativeName>
</protein>